<sequence length="516" mass="57946">MDFNAAVCAALAFISLLSYYLIWLRSASTHQAPPEAGGAWPFLGHLNIISGHTGLPHVSLGNLADKHGPIFGIRIGVHRAVVVSSSEVIKELFTTNDAAVSSRPSVKAGKHLAYDYAMLGFSSYGTYWRQMRKLVSLELFSARRVELQRNVRVSETAHFINELYSAWEERRDGSSRVSVEMKELFGELSMNVILKMVAGKRFSGGDDAEEARRCRRVMREFFHLAGLFVLSDAFPYLGWLDLGGHERRMKRTAEEMDELVGEWLAEHRRKEYSGEGKAQDFMDVMLSEVKGANFECEYDVDTIIKATCGTLIAGGTDTTAVVFIWALALLLNNPHVLQKAQHELDTHVGKQRRVNESDLNNLVYLQAITKETLRLYPPGPLGGTRRLTQDCHVGGYHIPKETWLIVNLWKLHRDPRVWSDPSEFRPERFLNGEKSMDVKGQDFELIPFSAGRRICPGTNFGLQMLHLVLASLLQAFDLSRVSNEEIDMSESAGLTNIKATPLDVLIAPRLPPSLYI</sequence>
<comment type="function">
    <text evidence="3">6-OH hydroxylase involved in the biosynthesis of polymethoxylated flavonoids natural products such as pebrellin, aroma compounds which contribute to the flavor of peppermint, and exhibit pharmacological activities such as anti-allergic, anti-oxidant, antibacterial, anti-proliferative, and anti-inflammatory effects (PubMed:23184958). Catalyzes the 6-hydroxylation of 7-O-methylated precursors such as the conversion of genkwanin (GENK) to scutellarein-7-methyl ether (SCU7Me) (PubMed:23184958). Can also use apigenin-7,4'-dimethyl ether (AdM), naringenin-7-methyl ether (SAK) and naringenin-7,4'-dimethyl ether (NdM) as substrates (PubMed:23184958).</text>
</comment>
<comment type="catalytic activity">
    <reaction evidence="3">
        <text>genkwanin + reduced [NADPH--hemoprotein reductase] + O2 = scutellarein 7-methyl ether + oxidized [NADPH--hemoprotein reductase] + H2O</text>
        <dbReference type="Rhea" id="RHEA:73427"/>
        <dbReference type="Rhea" id="RHEA-COMP:11964"/>
        <dbReference type="Rhea" id="RHEA-COMP:11965"/>
        <dbReference type="ChEBI" id="CHEBI:15377"/>
        <dbReference type="ChEBI" id="CHEBI:15379"/>
        <dbReference type="ChEBI" id="CHEBI:57618"/>
        <dbReference type="ChEBI" id="CHEBI:58210"/>
        <dbReference type="ChEBI" id="CHEBI:192700"/>
        <dbReference type="ChEBI" id="CHEBI:192701"/>
    </reaction>
    <physiologicalReaction direction="left-to-right" evidence="3">
        <dbReference type="Rhea" id="RHEA:73428"/>
    </physiologicalReaction>
</comment>
<comment type="catalytic activity">
    <reaction evidence="3">
        <text>(2S)-sakuranetin + reduced [NADPH--hemoprotein reductase] + O2 = (2S)-7-methylcarthamidin + oxidized [NADPH--hemoprotein reductase] + H2O + H(+)</text>
        <dbReference type="Rhea" id="RHEA:73431"/>
        <dbReference type="Rhea" id="RHEA-COMP:11964"/>
        <dbReference type="Rhea" id="RHEA-COMP:11965"/>
        <dbReference type="ChEBI" id="CHEBI:15377"/>
        <dbReference type="ChEBI" id="CHEBI:15378"/>
        <dbReference type="ChEBI" id="CHEBI:15379"/>
        <dbReference type="ChEBI" id="CHEBI:28927"/>
        <dbReference type="ChEBI" id="CHEBI:57618"/>
        <dbReference type="ChEBI" id="CHEBI:58210"/>
        <dbReference type="ChEBI" id="CHEBI:192815"/>
    </reaction>
    <physiologicalReaction direction="left-to-right" evidence="3">
        <dbReference type="Rhea" id="RHEA:73432"/>
    </physiologicalReaction>
</comment>
<comment type="catalytic activity">
    <reaction evidence="3">
        <text>apigenin 4',7-dimethyl ether + reduced [NADPH--hemoprotein reductase] + O2 = ladanein + oxidized [NADPH--hemoprotein reductase] + H2O + H(+)</text>
        <dbReference type="Rhea" id="RHEA:73435"/>
        <dbReference type="Rhea" id="RHEA-COMP:11964"/>
        <dbReference type="Rhea" id="RHEA-COMP:11965"/>
        <dbReference type="ChEBI" id="CHEBI:2769"/>
        <dbReference type="ChEBI" id="CHEBI:15377"/>
        <dbReference type="ChEBI" id="CHEBI:15378"/>
        <dbReference type="ChEBI" id="CHEBI:15379"/>
        <dbReference type="ChEBI" id="CHEBI:57618"/>
        <dbReference type="ChEBI" id="CHEBI:58210"/>
        <dbReference type="ChEBI" id="CHEBI:192702"/>
    </reaction>
    <physiologicalReaction direction="left-to-right" evidence="3">
        <dbReference type="Rhea" id="RHEA:73436"/>
    </physiologicalReaction>
</comment>
<comment type="catalytic activity">
    <reaction evidence="3">
        <text>(2S)-naringenin 4',7-dimethyl ether + reduced [NADPH--hemoprotein reductase] + O2 = (2S)-carthamidin-4',7-dimethyl ether + oxidized [NADPH--hemoprotein reductase] + H2O + H(+)</text>
        <dbReference type="Rhea" id="RHEA:73439"/>
        <dbReference type="Rhea" id="RHEA-COMP:11964"/>
        <dbReference type="Rhea" id="RHEA-COMP:11965"/>
        <dbReference type="ChEBI" id="CHEBI:15377"/>
        <dbReference type="ChEBI" id="CHEBI:15378"/>
        <dbReference type="ChEBI" id="CHEBI:15379"/>
        <dbReference type="ChEBI" id="CHEBI:57618"/>
        <dbReference type="ChEBI" id="CHEBI:58210"/>
        <dbReference type="ChEBI" id="CHEBI:192816"/>
        <dbReference type="ChEBI" id="CHEBI:192817"/>
    </reaction>
    <physiologicalReaction direction="left-to-right" evidence="3">
        <dbReference type="Rhea" id="RHEA:73440"/>
    </physiologicalReaction>
</comment>
<comment type="cofactor">
    <cofactor evidence="1">
        <name>heme</name>
        <dbReference type="ChEBI" id="CHEBI:30413"/>
    </cofactor>
</comment>
<comment type="pathway">
    <text evidence="5">Flavonoid metabolism.</text>
</comment>
<comment type="subcellular location">
    <subcellularLocation>
        <location evidence="2">Membrane</location>
        <topology evidence="2">Single-pass membrane protein</topology>
    </subcellularLocation>
</comment>
<comment type="similarity">
    <text evidence="6">Belongs to the cytochrome P450 family.</text>
</comment>
<organism>
    <name type="scientific">Mentha piperita</name>
    <name type="common">Peppermint</name>
    <name type="synonym">Mentha aquatica x Mentha spicata</name>
    <dbReference type="NCBI Taxonomy" id="34256"/>
    <lineage>
        <taxon>Eukaryota</taxon>
        <taxon>Viridiplantae</taxon>
        <taxon>Streptophyta</taxon>
        <taxon>Embryophyta</taxon>
        <taxon>Tracheophyta</taxon>
        <taxon>Spermatophyta</taxon>
        <taxon>Magnoliopsida</taxon>
        <taxon>eudicotyledons</taxon>
        <taxon>Gunneridae</taxon>
        <taxon>Pentapetalae</taxon>
        <taxon>asterids</taxon>
        <taxon>lamiids</taxon>
        <taxon>Lamiales</taxon>
        <taxon>Lamiaceae</taxon>
        <taxon>Nepetoideae</taxon>
        <taxon>Mentheae</taxon>
        <taxon>Menthinae</taxon>
        <taxon>Mentha</taxon>
    </lineage>
</organism>
<proteinExistence type="evidence at protein level"/>
<gene>
    <name evidence="4" type="primary">F6H</name>
    <name evidence="4" type="synonym">CYP82D62</name>
</gene>
<evidence type="ECO:0000250" key="1">
    <source>
        <dbReference type="UniProtKB" id="Q94IP1"/>
    </source>
</evidence>
<evidence type="ECO:0000255" key="2"/>
<evidence type="ECO:0000269" key="3">
    <source>
    </source>
</evidence>
<evidence type="ECO:0000303" key="4">
    <source>
    </source>
</evidence>
<evidence type="ECO:0000303" key="5">
    <source>
    </source>
</evidence>
<evidence type="ECO:0000305" key="6"/>
<reference key="1">
    <citation type="journal article" date="2013" name="J. Biol. Chem.">
        <title>The roles of a flavone-6-hydroxylase and 7-O-demethylation in the flavone biosynthetic network of sweet basil.</title>
        <authorList>
            <person name="Berim A."/>
            <person name="Gang D.R."/>
        </authorList>
    </citation>
    <scope>NUCLEOTIDE SEQUENCE [MRNA]</scope>
    <scope>FUNCTION</scope>
    <scope>CATALYTIC ACTIVITY</scope>
    <source>
        <tissue>Peltate glandular trichome</tissue>
    </source>
</reference>
<reference key="2">
    <citation type="journal article" date="2019" name="Nat. Prod. Rep.">
        <title>Non-volatile natural products in plant glandular trichomes: chemistry, biological activities and biosynthesis.</title>
        <authorList>
            <person name="Liu Y."/>
            <person name="Jing S.-X."/>
            <person name="Luo S.-H."/>
            <person name="Li S.-H."/>
        </authorList>
    </citation>
    <scope>PATHWAY</scope>
    <scope>REVIEW</scope>
</reference>
<name>F6H_MENPI</name>
<feature type="chain" id="PRO_0000456925" description="Flavonoid-6-hydroxylase">
    <location>
        <begin position="1"/>
        <end position="516"/>
    </location>
</feature>
<feature type="transmembrane region" description="Helical" evidence="2">
    <location>
        <begin position="3"/>
        <end position="23"/>
    </location>
</feature>
<feature type="binding site" description="axial binding residue" evidence="1">
    <location>
        <position position="455"/>
    </location>
    <ligand>
        <name>heme</name>
        <dbReference type="ChEBI" id="CHEBI:30413"/>
    </ligand>
    <ligandPart>
        <name>Fe</name>
        <dbReference type="ChEBI" id="CHEBI:18248"/>
    </ligandPart>
</feature>
<dbReference type="EC" id="1.14.14.-" evidence="3"/>
<dbReference type="EMBL" id="JX162214">
    <property type="protein sequence ID" value="AGF30366.1"/>
    <property type="molecule type" value="mRNA"/>
</dbReference>
<dbReference type="SMR" id="M1KVN4"/>
<dbReference type="BioCyc" id="MetaCyc:MONOMER-18143"/>
<dbReference type="GO" id="GO:0016020">
    <property type="term" value="C:membrane"/>
    <property type="evidence" value="ECO:0007669"/>
    <property type="project" value="UniProtKB-SubCell"/>
</dbReference>
<dbReference type="GO" id="GO:0020037">
    <property type="term" value="F:heme binding"/>
    <property type="evidence" value="ECO:0007669"/>
    <property type="project" value="InterPro"/>
</dbReference>
<dbReference type="GO" id="GO:0005506">
    <property type="term" value="F:iron ion binding"/>
    <property type="evidence" value="ECO:0007669"/>
    <property type="project" value="InterPro"/>
</dbReference>
<dbReference type="GO" id="GO:0004497">
    <property type="term" value="F:monooxygenase activity"/>
    <property type="evidence" value="ECO:0007669"/>
    <property type="project" value="UniProtKB-KW"/>
</dbReference>
<dbReference type="GO" id="GO:0016705">
    <property type="term" value="F:oxidoreductase activity, acting on paired donors, with incorporation or reduction of molecular oxygen"/>
    <property type="evidence" value="ECO:0007669"/>
    <property type="project" value="InterPro"/>
</dbReference>
<dbReference type="CDD" id="cd20654">
    <property type="entry name" value="CYP82"/>
    <property type="match status" value="1"/>
</dbReference>
<dbReference type="FunFam" id="1.10.630.10:FF:000026">
    <property type="entry name" value="Cytochrome P450 82C4"/>
    <property type="match status" value="1"/>
</dbReference>
<dbReference type="Gene3D" id="1.10.630.10">
    <property type="entry name" value="Cytochrome P450"/>
    <property type="match status" value="1"/>
</dbReference>
<dbReference type="InterPro" id="IPR001128">
    <property type="entry name" value="Cyt_P450"/>
</dbReference>
<dbReference type="InterPro" id="IPR017972">
    <property type="entry name" value="Cyt_P450_CS"/>
</dbReference>
<dbReference type="InterPro" id="IPR002401">
    <property type="entry name" value="Cyt_P450_E_grp-I"/>
</dbReference>
<dbReference type="InterPro" id="IPR036396">
    <property type="entry name" value="Cyt_P450_sf"/>
</dbReference>
<dbReference type="InterPro" id="IPR050651">
    <property type="entry name" value="Plant_Cytochrome_P450_Monoox"/>
</dbReference>
<dbReference type="PANTHER" id="PTHR47947:SF39">
    <property type="entry name" value="CYTOCHROME P450"/>
    <property type="match status" value="1"/>
</dbReference>
<dbReference type="PANTHER" id="PTHR47947">
    <property type="entry name" value="CYTOCHROME P450 82C3-RELATED"/>
    <property type="match status" value="1"/>
</dbReference>
<dbReference type="Pfam" id="PF00067">
    <property type="entry name" value="p450"/>
    <property type="match status" value="1"/>
</dbReference>
<dbReference type="PRINTS" id="PR00463">
    <property type="entry name" value="EP450I"/>
</dbReference>
<dbReference type="PRINTS" id="PR00385">
    <property type="entry name" value="P450"/>
</dbReference>
<dbReference type="SUPFAM" id="SSF48264">
    <property type="entry name" value="Cytochrome P450"/>
    <property type="match status" value="1"/>
</dbReference>
<dbReference type="PROSITE" id="PS00086">
    <property type="entry name" value="CYTOCHROME_P450"/>
    <property type="match status" value="1"/>
</dbReference>
<protein>
    <recommendedName>
        <fullName evidence="4">Flavonoid-6-hydroxylase</fullName>
        <shortName evidence="4">MpF6H</shortName>
        <ecNumber evidence="3">1.14.14.-</ecNumber>
    </recommendedName>
    <alternativeName>
        <fullName evidence="4">CYP450 monooxygenase CYP82D62</fullName>
    </alternativeName>
    <alternativeName>
        <fullName evidence="4">Cytochrome P450 82D62</fullName>
    </alternativeName>
</protein>
<accession>M1KVN4</accession>
<keyword id="KW-0349">Heme</keyword>
<keyword id="KW-0408">Iron</keyword>
<keyword id="KW-0472">Membrane</keyword>
<keyword id="KW-0479">Metal-binding</keyword>
<keyword id="KW-0503">Monooxygenase</keyword>
<keyword id="KW-0560">Oxidoreductase</keyword>
<keyword id="KW-0812">Transmembrane</keyword>
<keyword id="KW-1133">Transmembrane helix</keyword>